<protein>
    <recommendedName>
        <fullName>AP-3 complex subunit delta-1</fullName>
    </recommendedName>
    <alternativeName>
        <fullName>AP-3 complex subunit delta</fullName>
    </alternativeName>
    <alternativeName>
        <fullName>Adaptor-related protein complex 3 subunit delta-1</fullName>
    </alternativeName>
    <alternativeName>
        <fullName>Delta-adaptin</fullName>
        <shortName>mBLVR1</shortName>
    </alternativeName>
</protein>
<feature type="initiator methionine" description="Removed" evidence="2">
    <location>
        <position position="1"/>
    </location>
</feature>
<feature type="chain" id="PRO_0000193767" description="AP-3 complex subunit delta-1">
    <location>
        <begin position="2"/>
        <end position="1199"/>
    </location>
</feature>
<feature type="repeat" description="HEAT 1">
    <location>
        <begin position="34"/>
        <end position="71"/>
    </location>
</feature>
<feature type="repeat" description="HEAT 2">
    <location>
        <begin position="142"/>
        <end position="179"/>
    </location>
</feature>
<feature type="repeat" description="HEAT 3">
    <location>
        <begin position="180"/>
        <end position="216"/>
    </location>
</feature>
<feature type="repeat" description="HEAT 4">
    <location>
        <begin position="218"/>
        <end position="254"/>
    </location>
</feature>
<feature type="repeat" description="HEAT 5">
    <location>
        <begin position="257"/>
        <end position="296"/>
    </location>
</feature>
<feature type="repeat" description="HEAT 6">
    <location>
        <begin position="298"/>
        <end position="336"/>
    </location>
</feature>
<feature type="repeat" description="HEAT 7">
    <location>
        <begin position="337"/>
        <end position="373"/>
    </location>
</feature>
<feature type="repeat" description="HEAT 8">
    <location>
        <begin position="375"/>
        <end position="409"/>
    </location>
</feature>
<feature type="repeat" description="HEAT 9">
    <location>
        <begin position="521"/>
        <end position="558"/>
    </location>
</feature>
<feature type="region of interest" description="Disordered" evidence="5">
    <location>
        <begin position="623"/>
        <end position="695"/>
    </location>
</feature>
<feature type="region of interest" description="Disordered" evidence="5">
    <location>
        <begin position="724"/>
        <end position="963"/>
    </location>
</feature>
<feature type="coiled-coil region" evidence="4">
    <location>
        <begin position="659"/>
        <end position="679"/>
    </location>
</feature>
<feature type="coiled-coil region" evidence="4">
    <location>
        <begin position="722"/>
        <end position="750"/>
    </location>
</feature>
<feature type="coiled-coil region" evidence="4">
    <location>
        <begin position="843"/>
        <end position="863"/>
    </location>
</feature>
<feature type="coiled-coil region" evidence="4">
    <location>
        <begin position="911"/>
        <end position="934"/>
    </location>
</feature>
<feature type="compositionally biased region" description="Basic and acidic residues" evidence="5">
    <location>
        <begin position="639"/>
        <end position="651"/>
    </location>
</feature>
<feature type="compositionally biased region" description="Basic and acidic residues" evidence="5">
    <location>
        <begin position="665"/>
        <end position="675"/>
    </location>
</feature>
<feature type="compositionally biased region" description="Basic residues" evidence="5">
    <location>
        <begin position="732"/>
        <end position="754"/>
    </location>
</feature>
<feature type="compositionally biased region" description="Acidic residues" evidence="5">
    <location>
        <begin position="773"/>
        <end position="790"/>
    </location>
</feature>
<feature type="compositionally biased region" description="Basic and acidic residues" evidence="5">
    <location>
        <begin position="791"/>
        <end position="836"/>
    </location>
</feature>
<feature type="compositionally biased region" description="Basic residues" evidence="5">
    <location>
        <begin position="837"/>
        <end position="846"/>
    </location>
</feature>
<feature type="compositionally biased region" description="Basic and acidic residues" evidence="5">
    <location>
        <begin position="847"/>
        <end position="862"/>
    </location>
</feature>
<feature type="compositionally biased region" description="Pro residues" evidence="5">
    <location>
        <begin position="870"/>
        <end position="880"/>
    </location>
</feature>
<feature type="compositionally biased region" description="Basic and acidic residues" evidence="5">
    <location>
        <begin position="894"/>
        <end position="916"/>
    </location>
</feature>
<feature type="compositionally biased region" description="Basic residues" evidence="5">
    <location>
        <begin position="917"/>
        <end position="928"/>
    </location>
</feature>
<feature type="modified residue" description="N-acetylalanine" evidence="2">
    <location>
        <position position="2"/>
    </location>
</feature>
<feature type="modified residue" description="Phosphoserine" evidence="9 12 13">
    <location>
        <position position="632"/>
    </location>
</feature>
<feature type="modified residue" description="Phosphoserine" evidence="12 13">
    <location>
        <position position="634"/>
    </location>
</feature>
<feature type="modified residue" description="Phosphoserine" evidence="12">
    <location>
        <position position="636"/>
    </location>
</feature>
<feature type="modified residue" description="Phosphoserine" evidence="2">
    <location>
        <position position="688"/>
    </location>
</feature>
<feature type="modified residue" description="Phosphoserine" evidence="13">
    <location>
        <position position="754"/>
    </location>
</feature>
<feature type="modified residue" description="Phosphoserine" evidence="9 12 13">
    <location>
        <position position="755"/>
    </location>
</feature>
<feature type="modified residue" description="Phosphothreonine" evidence="9 11 12 13">
    <location>
        <position position="758"/>
    </location>
</feature>
<feature type="modified residue" description="Phosphoserine" evidence="9 10 11 12 13">
    <location>
        <position position="760"/>
    </location>
</feature>
<feature type="modified residue" description="Phosphoserine" evidence="9 12 13">
    <location>
        <position position="784"/>
    </location>
</feature>
<feature type="modified residue" description="Phosphoserine" evidence="8 9 13">
    <location>
        <position position="825"/>
    </location>
</feature>
<name>AP3D1_MOUSE</name>
<proteinExistence type="evidence at protein level"/>
<accession>O54774</accession>
<evidence type="ECO:0000250" key="1"/>
<evidence type="ECO:0000250" key="2">
    <source>
        <dbReference type="UniProtKB" id="O14617"/>
    </source>
</evidence>
<evidence type="ECO:0000250" key="3">
    <source>
        <dbReference type="UniProtKB" id="Q865S1"/>
    </source>
</evidence>
<evidence type="ECO:0000255" key="4"/>
<evidence type="ECO:0000256" key="5">
    <source>
        <dbReference type="SAM" id="MobiDB-lite"/>
    </source>
</evidence>
<evidence type="ECO:0000269" key="6">
    <source>
    </source>
</evidence>
<evidence type="ECO:0000305" key="7"/>
<evidence type="ECO:0007744" key="8">
    <source>
    </source>
</evidence>
<evidence type="ECO:0007744" key="9">
    <source>
    </source>
</evidence>
<evidence type="ECO:0007744" key="10">
    <source>
    </source>
</evidence>
<evidence type="ECO:0007744" key="11">
    <source>
    </source>
</evidence>
<evidence type="ECO:0007744" key="12">
    <source>
    </source>
</evidence>
<evidence type="ECO:0007744" key="13">
    <source>
    </source>
</evidence>
<gene>
    <name type="primary">Ap3d1</name>
    <name type="synonym">Ap3d</name>
</gene>
<organism>
    <name type="scientific">Mus musculus</name>
    <name type="common">Mouse</name>
    <dbReference type="NCBI Taxonomy" id="10090"/>
    <lineage>
        <taxon>Eukaryota</taxon>
        <taxon>Metazoa</taxon>
        <taxon>Chordata</taxon>
        <taxon>Craniata</taxon>
        <taxon>Vertebrata</taxon>
        <taxon>Euteleostomi</taxon>
        <taxon>Mammalia</taxon>
        <taxon>Eutheria</taxon>
        <taxon>Euarchontoglires</taxon>
        <taxon>Glires</taxon>
        <taxon>Rodentia</taxon>
        <taxon>Myomorpha</taxon>
        <taxon>Muroidea</taxon>
        <taxon>Muridae</taxon>
        <taxon>Murinae</taxon>
        <taxon>Mus</taxon>
        <taxon>Mus</taxon>
    </lineage>
</organism>
<comment type="function">
    <text evidence="2 6">Part of the AP-3 complex, an adaptor-related complex which is not clathrin-associated. The complex is associated with the Golgi region as well as more peripheral structures. It facilitates the budding of vesicles from the Golgi membrane and may be directly involved in trafficking to lysosomes (By similarity). Involved in process of CD8+ T-cell and NK cell degranulation (By similarity). In concert with the BLOC-1 complex, AP-3 is required to target cargos into vesicles assembled at cell bodies for delivery into neurites and nerve terminals (PubMed:21998198).</text>
</comment>
<comment type="subunit">
    <text evidence="2 3">Adaptor protein complex 3 (AP-3) is a heterotetramer composed of two large adaptins (delta-type subunit AP3D1 and beta-type subunit AP3B1 or AP3B2), a medium adaptin (mu-type subunit AP3M1 or AP3M2) and a small adaptin (sigma-type subunit APS1 or AP3S2) (By similarity). AP-3 associates with the BLOC-1 complex. Interacts with SLC30A2. Interacts with CLN3 (via dileucine motif); this interaction facilitates lysosomal targeting (By similarity).</text>
</comment>
<comment type="subcellular location">
    <subcellularLocation>
        <location evidence="1">Cytoplasm</location>
    </subcellularLocation>
    <subcellularLocation>
        <location evidence="1">Golgi apparatus membrane</location>
        <topology evidence="1">Peripheral membrane protein</topology>
        <orientation evidence="1">Cytoplasmic side</orientation>
    </subcellularLocation>
</comment>
<comment type="similarity">
    <text evidence="7">Belongs to the adaptor complexes large subunit family.</text>
</comment>
<keyword id="KW-0007">Acetylation</keyword>
<keyword id="KW-0175">Coiled coil</keyword>
<keyword id="KW-0963">Cytoplasm</keyword>
<keyword id="KW-0333">Golgi apparatus</keyword>
<keyword id="KW-0472">Membrane</keyword>
<keyword id="KW-0597">Phosphoprotein</keyword>
<keyword id="KW-0653">Protein transport</keyword>
<keyword id="KW-1185">Reference proteome</keyword>
<keyword id="KW-0677">Repeat</keyword>
<keyword id="KW-0813">Transport</keyword>
<dbReference type="EMBL" id="AB004305">
    <property type="protein sequence ID" value="BAA24578.1"/>
    <property type="molecule type" value="mRNA"/>
</dbReference>
<dbReference type="EMBL" id="BC048786">
    <property type="protein sequence ID" value="AAH48786.1"/>
    <property type="molecule type" value="mRNA"/>
</dbReference>
<dbReference type="EMBL" id="BC053066">
    <property type="protein sequence ID" value="AAH53066.1"/>
    <property type="molecule type" value="mRNA"/>
</dbReference>
<dbReference type="CCDS" id="CCDS35984.1"/>
<dbReference type="PIR" id="T13946">
    <property type="entry name" value="T13946"/>
</dbReference>
<dbReference type="RefSeq" id="NP_031486.1">
    <property type="nucleotide sequence ID" value="NM_007460.3"/>
</dbReference>
<dbReference type="SMR" id="O54774"/>
<dbReference type="BioGRID" id="198134">
    <property type="interactions" value="26"/>
</dbReference>
<dbReference type="ComplexPortal" id="CPX-5145">
    <property type="entry name" value="Ubiquitous AP-3 Adaptor complex, sigma3a variant"/>
</dbReference>
<dbReference type="ComplexPortal" id="CPX-5146">
    <property type="entry name" value="Ubiquitous AP-3 Adaptor complex, sigma3b variant"/>
</dbReference>
<dbReference type="ComplexPortal" id="CPX-5147">
    <property type="entry name" value="Neuronal AP-3 Adaptor complex, sigma3a variant"/>
</dbReference>
<dbReference type="ComplexPortal" id="CPX-5148">
    <property type="entry name" value="Neuronal AP-3 Adaptor complex, sigma3b variant"/>
</dbReference>
<dbReference type="DIP" id="DIP-32163N"/>
<dbReference type="FunCoup" id="O54774">
    <property type="interactions" value="3004"/>
</dbReference>
<dbReference type="IntAct" id="O54774">
    <property type="interactions" value="11"/>
</dbReference>
<dbReference type="MINT" id="O54774"/>
<dbReference type="STRING" id="10090.ENSMUSP00000020420"/>
<dbReference type="GlyGen" id="O54774">
    <property type="glycosylation" value="1 site, 1 O-linked glycan (1 site)"/>
</dbReference>
<dbReference type="iPTMnet" id="O54774"/>
<dbReference type="MetOSite" id="O54774"/>
<dbReference type="PhosphoSitePlus" id="O54774"/>
<dbReference type="SwissPalm" id="O54774"/>
<dbReference type="jPOST" id="O54774"/>
<dbReference type="PaxDb" id="10090-ENSMUSP00000020420"/>
<dbReference type="PeptideAtlas" id="O54774"/>
<dbReference type="ProteomicsDB" id="296210"/>
<dbReference type="Pumba" id="O54774"/>
<dbReference type="Antibodypedia" id="22913">
    <property type="antibodies" value="97 antibodies from 28 providers"/>
</dbReference>
<dbReference type="Ensembl" id="ENSMUST00000020420.9">
    <property type="protein sequence ID" value="ENSMUSP00000020420.8"/>
    <property type="gene ID" value="ENSMUSG00000020198.9"/>
</dbReference>
<dbReference type="GeneID" id="11776"/>
<dbReference type="KEGG" id="mmu:11776"/>
<dbReference type="UCSC" id="uc007gek.1">
    <property type="organism name" value="mouse"/>
</dbReference>
<dbReference type="AGR" id="MGI:107734"/>
<dbReference type="CTD" id="8943"/>
<dbReference type="MGI" id="MGI:107734">
    <property type="gene designation" value="Ap3d1"/>
</dbReference>
<dbReference type="VEuPathDB" id="HostDB:ENSMUSG00000020198"/>
<dbReference type="eggNOG" id="KOG1059">
    <property type="taxonomic scope" value="Eukaryota"/>
</dbReference>
<dbReference type="GeneTree" id="ENSGT00550000075067"/>
<dbReference type="HOGENOM" id="CLU_001908_0_0_1"/>
<dbReference type="InParanoid" id="O54774"/>
<dbReference type="OMA" id="ICITNIG"/>
<dbReference type="OrthoDB" id="10264595at2759"/>
<dbReference type="PhylomeDB" id="O54774"/>
<dbReference type="TreeFam" id="TF105666"/>
<dbReference type="BioGRID-ORCS" id="11776">
    <property type="hits" value="6 hits in 80 CRISPR screens"/>
</dbReference>
<dbReference type="ChiTaRS" id="Ap3d1">
    <property type="organism name" value="mouse"/>
</dbReference>
<dbReference type="PRO" id="PR:O54774"/>
<dbReference type="Proteomes" id="UP000000589">
    <property type="component" value="Chromosome 10"/>
</dbReference>
<dbReference type="RNAct" id="O54774">
    <property type="molecule type" value="protein"/>
</dbReference>
<dbReference type="Bgee" id="ENSMUSG00000020198">
    <property type="expression patterns" value="Expressed in ileal epithelium and 258 other cell types or tissues"/>
</dbReference>
<dbReference type="ExpressionAtlas" id="O54774">
    <property type="expression patterns" value="baseline and differential"/>
</dbReference>
<dbReference type="GO" id="GO:0030123">
    <property type="term" value="C:AP-3 adaptor complex"/>
    <property type="evidence" value="ECO:0000303"/>
    <property type="project" value="ComplexPortal"/>
</dbReference>
<dbReference type="GO" id="GO:0030424">
    <property type="term" value="C:axon"/>
    <property type="evidence" value="ECO:0000314"/>
    <property type="project" value="MGI"/>
</dbReference>
<dbReference type="GO" id="GO:1904115">
    <property type="term" value="C:axon cytoplasm"/>
    <property type="evidence" value="ECO:0007669"/>
    <property type="project" value="GOC"/>
</dbReference>
<dbReference type="GO" id="GO:0005769">
    <property type="term" value="C:early endosome"/>
    <property type="evidence" value="ECO:0000303"/>
    <property type="project" value="ComplexPortal"/>
</dbReference>
<dbReference type="GO" id="GO:0010008">
    <property type="term" value="C:endosome membrane"/>
    <property type="evidence" value="ECO:0000314"/>
    <property type="project" value="UniProtKB"/>
</dbReference>
<dbReference type="GO" id="GO:0098978">
    <property type="term" value="C:glutamatergic synapse"/>
    <property type="evidence" value="ECO:0000314"/>
    <property type="project" value="SynGO"/>
</dbReference>
<dbReference type="GO" id="GO:0000139">
    <property type="term" value="C:Golgi membrane"/>
    <property type="evidence" value="ECO:0007669"/>
    <property type="project" value="UniProtKB-SubCell"/>
</dbReference>
<dbReference type="GO" id="GO:0098794">
    <property type="term" value="C:postsynapse"/>
    <property type="evidence" value="ECO:0000314"/>
    <property type="project" value="SynGO"/>
</dbReference>
<dbReference type="GO" id="GO:0098793">
    <property type="term" value="C:presynapse"/>
    <property type="evidence" value="ECO:0000314"/>
    <property type="project" value="SynGO"/>
</dbReference>
<dbReference type="GO" id="GO:0098830">
    <property type="term" value="C:presynaptic endosome"/>
    <property type="evidence" value="ECO:0000314"/>
    <property type="project" value="SynGO"/>
</dbReference>
<dbReference type="GO" id="GO:0043195">
    <property type="term" value="C:terminal bouton"/>
    <property type="evidence" value="ECO:0000314"/>
    <property type="project" value="MGI"/>
</dbReference>
<dbReference type="GO" id="GO:0005802">
    <property type="term" value="C:trans-Golgi network"/>
    <property type="evidence" value="ECO:0000304"/>
    <property type="project" value="MGI"/>
</dbReference>
<dbReference type="GO" id="GO:0008089">
    <property type="term" value="P:anterograde axonal transport"/>
    <property type="evidence" value="ECO:0000315"/>
    <property type="project" value="UniProtKB"/>
</dbReference>
<dbReference type="GO" id="GO:0048490">
    <property type="term" value="P:anterograde synaptic vesicle transport"/>
    <property type="evidence" value="ECO:0000315"/>
    <property type="project" value="UniProtKB"/>
</dbReference>
<dbReference type="GO" id="GO:0019882">
    <property type="term" value="P:antigen processing and presentation"/>
    <property type="evidence" value="ECO:0000315"/>
    <property type="project" value="MGI"/>
</dbReference>
<dbReference type="GO" id="GO:0048007">
    <property type="term" value="P:antigen processing and presentation, exogenous lipid antigen via MHC class Ib"/>
    <property type="evidence" value="ECO:0000315"/>
    <property type="project" value="MGI"/>
</dbReference>
<dbReference type="GO" id="GO:0035654">
    <property type="term" value="P:clathrin-coated vesicle cargo loading, AP-3-mediated"/>
    <property type="evidence" value="ECO:0000303"/>
    <property type="project" value="ComplexPortal"/>
</dbReference>
<dbReference type="GO" id="GO:0035646">
    <property type="term" value="P:endosome to melanosome transport"/>
    <property type="evidence" value="ECO:0007669"/>
    <property type="project" value="Ensembl"/>
</dbReference>
<dbReference type="GO" id="GO:0006886">
    <property type="term" value="P:intracellular protein transport"/>
    <property type="evidence" value="ECO:0000315"/>
    <property type="project" value="MGI"/>
</dbReference>
<dbReference type="GO" id="GO:0046907">
    <property type="term" value="P:intracellular transport"/>
    <property type="evidence" value="ECO:0000303"/>
    <property type="project" value="ComplexPortal"/>
</dbReference>
<dbReference type="GO" id="GO:1903232">
    <property type="term" value="P:melanosome assembly"/>
    <property type="evidence" value="ECO:0000303"/>
    <property type="project" value="ComplexPortal"/>
</dbReference>
<dbReference type="GO" id="GO:0098943">
    <property type="term" value="P:neurotransmitter receptor transport, postsynaptic endosome to lysosome"/>
    <property type="evidence" value="ECO:0000314"/>
    <property type="project" value="SynGO"/>
</dbReference>
<dbReference type="GO" id="GO:0060155">
    <property type="term" value="P:platelet dense granule organization"/>
    <property type="evidence" value="ECO:0000303"/>
    <property type="project" value="ComplexPortal"/>
</dbReference>
<dbReference type="GO" id="GO:0051138">
    <property type="term" value="P:positive regulation of NK T cell differentiation"/>
    <property type="evidence" value="ECO:0000315"/>
    <property type="project" value="MGI"/>
</dbReference>
<dbReference type="GO" id="GO:0045944">
    <property type="term" value="P:positive regulation of transcription by RNA polymerase II"/>
    <property type="evidence" value="ECO:0000315"/>
    <property type="project" value="MGI"/>
</dbReference>
<dbReference type="GO" id="GO:0072657">
    <property type="term" value="P:protein localization to membrane"/>
    <property type="evidence" value="ECO:0007669"/>
    <property type="project" value="Ensembl"/>
</dbReference>
<dbReference type="GO" id="GO:0033365">
    <property type="term" value="P:protein localization to organelle"/>
    <property type="evidence" value="ECO:0000315"/>
    <property type="project" value="MGI"/>
</dbReference>
<dbReference type="GO" id="GO:0006605">
    <property type="term" value="P:protein targeting"/>
    <property type="evidence" value="ECO:0000315"/>
    <property type="project" value="MGI"/>
</dbReference>
<dbReference type="GO" id="GO:0016182">
    <property type="term" value="P:synaptic vesicle budding from endosome"/>
    <property type="evidence" value="ECO:0000314"/>
    <property type="project" value="SynGO"/>
</dbReference>
<dbReference type="GO" id="GO:0016183">
    <property type="term" value="P:synaptic vesicle coating"/>
    <property type="evidence" value="ECO:0000303"/>
    <property type="project" value="ComplexPortal"/>
</dbReference>
<dbReference type="GO" id="GO:0048499">
    <property type="term" value="P:synaptic vesicle membrane organization"/>
    <property type="evidence" value="ECO:0000315"/>
    <property type="project" value="MGI"/>
</dbReference>
<dbReference type="GO" id="GO:0036465">
    <property type="term" value="P:synaptic vesicle recycling"/>
    <property type="evidence" value="ECO:0000303"/>
    <property type="project" value="ComplexPortal"/>
</dbReference>
<dbReference type="GO" id="GO:0016192">
    <property type="term" value="P:vesicle-mediated transport"/>
    <property type="evidence" value="ECO:0000304"/>
    <property type="project" value="MGI"/>
</dbReference>
<dbReference type="GO" id="GO:0099003">
    <property type="term" value="P:vesicle-mediated transport in synapse"/>
    <property type="evidence" value="ECO:0000314"/>
    <property type="project" value="SynGO"/>
</dbReference>
<dbReference type="GO" id="GO:0140916">
    <property type="term" value="P:zinc ion import into lysosome"/>
    <property type="evidence" value="ECO:0007669"/>
    <property type="project" value="Ensembl"/>
</dbReference>
<dbReference type="FunFam" id="1.25.10.10:FF:000055">
    <property type="entry name" value="AP-3 complex subunit delta"/>
    <property type="match status" value="1"/>
</dbReference>
<dbReference type="FunFam" id="3.30.450.50:FF:000001">
    <property type="entry name" value="AP-3 complex subunit delta-1, putative"/>
    <property type="match status" value="1"/>
</dbReference>
<dbReference type="Gene3D" id="1.25.10.10">
    <property type="entry name" value="Leucine-rich Repeat Variant"/>
    <property type="match status" value="1"/>
</dbReference>
<dbReference type="Gene3D" id="3.30.450.50">
    <property type="entry name" value="Longin domain"/>
    <property type="match status" value="1"/>
</dbReference>
<dbReference type="InterPro" id="IPR017105">
    <property type="entry name" value="AP3_complex_dsu"/>
</dbReference>
<dbReference type="InterPro" id="IPR010474">
    <property type="entry name" value="AP3D_dom_metazoa"/>
</dbReference>
<dbReference type="InterPro" id="IPR011989">
    <property type="entry name" value="ARM-like"/>
</dbReference>
<dbReference type="InterPro" id="IPR016024">
    <property type="entry name" value="ARM-type_fold"/>
</dbReference>
<dbReference type="InterPro" id="IPR002553">
    <property type="entry name" value="Clathrin/coatomer_adapt-like_N"/>
</dbReference>
<dbReference type="PANTHER" id="PTHR22781:SF12">
    <property type="entry name" value="AP-3 COMPLEX SUBUNIT DELTA-1"/>
    <property type="match status" value="1"/>
</dbReference>
<dbReference type="PANTHER" id="PTHR22781">
    <property type="entry name" value="DELTA ADAPTIN-RELATED"/>
    <property type="match status" value="1"/>
</dbReference>
<dbReference type="Pfam" id="PF01602">
    <property type="entry name" value="Adaptin_N"/>
    <property type="match status" value="1"/>
</dbReference>
<dbReference type="Pfam" id="PF06375">
    <property type="entry name" value="AP3D1"/>
    <property type="match status" value="1"/>
</dbReference>
<dbReference type="SMART" id="SM01354">
    <property type="entry name" value="BLVR"/>
    <property type="match status" value="1"/>
</dbReference>
<dbReference type="SUPFAM" id="SSF48371">
    <property type="entry name" value="ARM repeat"/>
    <property type="match status" value="1"/>
</dbReference>
<reference key="1">
    <citation type="journal article" date="1998" name="J. Virol.">
        <title>The mouse homolog of the bovine leukemia virus receptor is closely related to the delta subunit of adaptor-related protein complex AP-3, not associated with the cell surface.</title>
        <authorList>
            <person name="Suzuki T."/>
            <person name="Ikeda H."/>
        </authorList>
    </citation>
    <scope>NUCLEOTIDE SEQUENCE [MRNA]</scope>
    <source>
        <tissue>Spleen</tissue>
    </source>
</reference>
<reference key="2">
    <citation type="journal article" date="2004" name="Genome Res.">
        <title>The status, quality, and expansion of the NIH full-length cDNA project: the Mammalian Gene Collection (MGC).</title>
        <authorList>
            <consortium name="The MGC Project Team"/>
        </authorList>
    </citation>
    <scope>NUCLEOTIDE SEQUENCE [LARGE SCALE MRNA]</scope>
    <source>
        <strain>C57BL/6J</strain>
        <tissue>Brain</tissue>
        <tissue>Eye</tissue>
    </source>
</reference>
<reference key="3">
    <citation type="journal article" date="2006" name="Mol. Cell. Proteomics">
        <title>Comprehensive identification of phosphorylation sites in postsynaptic density preparations.</title>
        <authorList>
            <person name="Trinidad J.C."/>
            <person name="Specht C.G."/>
            <person name="Thalhammer A."/>
            <person name="Schoepfer R."/>
            <person name="Burlingame A.L."/>
        </authorList>
    </citation>
    <scope>PHOSPHORYLATION [LARGE SCALE ANALYSIS] AT SER-825</scope>
    <scope>IDENTIFICATION BY MASS SPECTROMETRY [LARGE SCALE ANALYSIS]</scope>
    <source>
        <tissue>Brain</tissue>
    </source>
</reference>
<reference key="4">
    <citation type="journal article" date="2007" name="Proc. Natl. Acad. Sci. U.S.A.">
        <title>Large-scale phosphorylation analysis of mouse liver.</title>
        <authorList>
            <person name="Villen J."/>
            <person name="Beausoleil S.A."/>
            <person name="Gerber S.A."/>
            <person name="Gygi S.P."/>
        </authorList>
    </citation>
    <scope>PHOSPHORYLATION [LARGE SCALE ANALYSIS] AT SER-632; SER-755; THR-758; SER-760; SER-784 AND SER-825</scope>
    <scope>IDENTIFICATION BY MASS SPECTROMETRY [LARGE SCALE ANALYSIS]</scope>
    <source>
        <tissue>Liver</tissue>
    </source>
</reference>
<reference key="5">
    <citation type="journal article" date="2008" name="J. Proteome Res.">
        <title>Specific phosphopeptide enrichment with immobilized titanium ion affinity chromatography adsorbent for phosphoproteome analysis.</title>
        <authorList>
            <person name="Zhou H."/>
            <person name="Ye M."/>
            <person name="Dong J."/>
            <person name="Han G."/>
            <person name="Jiang X."/>
            <person name="Wu R."/>
            <person name="Zou H."/>
        </authorList>
    </citation>
    <scope>PHOSPHORYLATION [LARGE SCALE ANALYSIS] AT SER-760</scope>
    <scope>IDENTIFICATION BY MASS SPECTROMETRY [LARGE SCALE ANALYSIS]</scope>
    <source>
        <tissue>Liver</tissue>
    </source>
</reference>
<reference key="6">
    <citation type="journal article" date="2009" name="Immunity">
        <title>The phagosomal proteome in interferon-gamma-activated macrophages.</title>
        <authorList>
            <person name="Trost M."/>
            <person name="English L."/>
            <person name="Lemieux S."/>
            <person name="Courcelles M."/>
            <person name="Desjardins M."/>
            <person name="Thibault P."/>
        </authorList>
    </citation>
    <scope>PHOSPHORYLATION [LARGE SCALE ANALYSIS] AT SER-632; SER-634; SER-636; SER-755; THR-758; SER-760 AND SER-784</scope>
    <scope>IDENTIFICATION BY MASS SPECTROMETRY [LARGE SCALE ANALYSIS]</scope>
</reference>
<reference key="7">
    <citation type="journal article" date="2009" name="Mol. Cell. Proteomics">
        <title>Large scale localization of protein phosphorylation by use of electron capture dissociation mass spectrometry.</title>
        <authorList>
            <person name="Sweet S.M."/>
            <person name="Bailey C.M."/>
            <person name="Cunningham D.L."/>
            <person name="Heath J.K."/>
            <person name="Cooper H.J."/>
        </authorList>
    </citation>
    <scope>PHOSPHORYLATION [LARGE SCALE ANALYSIS] AT THR-758 AND SER-760</scope>
    <scope>IDENTIFICATION BY MASS SPECTROMETRY [LARGE SCALE ANALYSIS]</scope>
    <source>
        <tissue>Embryonic fibroblast</tissue>
    </source>
</reference>
<reference key="8">
    <citation type="journal article" date="2010" name="Cell">
        <title>A tissue-specific atlas of mouse protein phosphorylation and expression.</title>
        <authorList>
            <person name="Huttlin E.L."/>
            <person name="Jedrychowski M.P."/>
            <person name="Elias J.E."/>
            <person name="Goswami T."/>
            <person name="Rad R."/>
            <person name="Beausoleil S.A."/>
            <person name="Villen J."/>
            <person name="Haas W."/>
            <person name="Sowa M.E."/>
            <person name="Gygi S.P."/>
        </authorList>
    </citation>
    <scope>PHOSPHORYLATION [LARGE SCALE ANALYSIS] AT SER-632; SER-634; SER-754; SER-755; THR-758; SER-760; SER-784 AND SER-825</scope>
    <scope>IDENTIFICATION BY MASS SPECTROMETRY [LARGE SCALE ANALYSIS]</scope>
    <source>
        <tissue>Brain</tissue>
        <tissue>Brown adipose tissue</tissue>
        <tissue>Heart</tissue>
        <tissue>Kidney</tissue>
        <tissue>Liver</tissue>
        <tissue>Lung</tissue>
        <tissue>Pancreas</tissue>
        <tissue>Spleen</tissue>
        <tissue>Testis</tissue>
    </source>
</reference>
<reference key="9">
    <citation type="journal article" date="2011" name="Mol. Biol. Cell">
        <title>The schizophrenia susceptibility factor dysbindin and its associated complex sort cargoes from cell bodies to the synapse.</title>
        <authorList>
            <person name="Larimore J."/>
            <person name="Tornieri K."/>
            <person name="Ryder P.V."/>
            <person name="Gokhale A."/>
            <person name="Zlatic S.A."/>
            <person name="Craige B."/>
            <person name="Lee J.D."/>
            <person name="Talbot K."/>
            <person name="Pare J.F."/>
            <person name="Smith Y."/>
            <person name="Faundez V."/>
        </authorList>
    </citation>
    <scope>FUNCTION</scope>
    <scope>ASSOCIATION WITH THE BLOC-1 COMPLEX</scope>
</reference>
<sequence>MALKMVKGSIDRMFDKNLQDLVRGIRNHKEDEAKYISQCIDEIKQELKQDNIAVKANAVCKLTYLQMLGYDISWAAFNIIEVMSASKFTFKRVGYLAASQCFHEGTDVIMLTTNQIRKDLSSPSQYDTGVALTGLSCFVTPDLARDLANDIMTLMSHTKPYIRKKAVLIMYKVFLKYPESLRPAFPRLKEKLEDPDPGVQSAAVNVICELARRNPKNYLSLAPLFFKLMTSSTNNWVLIKIIKLFGALTPLEPRLGKKLIEPLTNLIHSTSAMSLLYECVNTVIAVLISLSSGMPNHSASIQLCVQKLRILIEDSDQNLKYLGLLAMSKILKTHPKSVQSHKDLILQCLDDKDESIRLRALDLLYGMVSKKNLMEIVKKLMTHVDKAEGTTYRDELLTKIIDICSQSNYQHITNFEWYISILVELTRLEGTRHGHLIAAQMLDVAIRVKAIRKFAVSQMSSLLDSAHLVASSTQRNGICEVLYAAAWICGEFSEHLQGPQQTLEAMLRPKVTTLPGHIQAVYVQNVVKLYASILQQKEQAADTEAAQEVTQLLVERLPQFVQSADLEVQERASCILQLVKHVQKLQAKGVPVAEEVSALFAGELNPVAPKAQKKVPVPEGLDLDAWINEPPSDSESEDEKPKAIFHEEEPRHTRRRQPEEDEEELARRREARKQEQANNPFYIKSSPSPQKRYQDAPGVEHIPVVQIDLSVPLKVPGMPMSDQYVKLEEQRRHRQRLEKDKKRKKKEKGKRRHSSLPTESDEDIAPAQRVDIITEEMPENALPSDEDDKDPNDPYRALDIDLDKPLADSEKLPVQKHRNAEAVKSPEKEGVLGVEKKSKKPKKKEKKTKEREREKKDKKGEDLDFWLSTTPPPAAAPIPAPSTEELAASTITSPKDECEVLKGEEEDHVDHDQERKSSRHKKKKHRKEKEKEERPRDKKKAKKKQVAPLENGAAAEEEEEPIPPMSSYCLLAESPYIKVTYDIQASLQKDSQVTVSIILENQSSSFLKNMELNVLDSLNTKMTRPEGSSVHDGVPVPFQLPPGVSNEAQFVFTIQSIVMAQKLKGTLSFIAKDDEGATHEKLDFRLHFSCSSYLITTPCYSDAFAKLLESGDLSMNSIKVDGISMSFQNLLAKICFYHHFSVVERVDSCASMYSRSIQGHHVCLLVKKGESSVSVDGKCSDATLLSSLLEEMKTTLAQC</sequence>